<proteinExistence type="evidence at protein level"/>
<protein>
    <recommendedName>
        <fullName>Resistance to glucose repression protein 1</fullName>
    </recommendedName>
    <alternativeName>
        <fullName>Protein HEX2</fullName>
    </alternativeName>
    <alternativeName>
        <fullName>Second-site suppressor of the rna1-1 mutation 1</fullName>
    </alternativeName>
</protein>
<evidence type="ECO:0000255" key="1"/>
<evidence type="ECO:0000256" key="2">
    <source>
        <dbReference type="SAM" id="MobiDB-lite"/>
    </source>
</evidence>
<evidence type="ECO:0000269" key="3">
    <source>
    </source>
</evidence>
<evidence type="ECO:0000269" key="4">
    <source>
    </source>
</evidence>
<evidence type="ECO:0000269" key="5">
    <source>
    </source>
</evidence>
<evidence type="ECO:0000305" key="6"/>
<evidence type="ECO:0007744" key="7">
    <source>
    </source>
</evidence>
<evidence type="ECO:0007744" key="8">
    <source>
    </source>
</evidence>
<evidence type="ECO:0007744" key="9">
    <source>
    </source>
</evidence>
<evidence type="ECO:0007744" key="10">
    <source>
    </source>
</evidence>
<evidence type="ECO:0007744" key="11">
    <source>
    </source>
</evidence>
<evidence type="ECO:0007744" key="12">
    <source>
    </source>
</evidence>
<reference key="1">
    <citation type="journal article" date="1991" name="Eur. J. Biochem.">
        <title>Characterization of Hex2 protein, a negative regulatory element necessary for glucose repression in yeast.</title>
        <authorList>
            <person name="Niederacher D."/>
            <person name="Entian K.-D."/>
        </authorList>
    </citation>
    <scope>NUCLEOTIDE SEQUENCE [GENOMIC DNA]</scope>
</reference>
<reference key="2">
    <citation type="journal article" date="1992" name="Mol. Cell. Biol.">
        <title>SRN1, a yeast gene involved in RNA processing, is identical to HEX2/REG1, a negative regulator in glucose repression.</title>
        <authorList>
            <person name="Tung K.-S."/>
            <person name="Norbeck L.L."/>
            <person name="Nolan S.L."/>
            <person name="Atkinson N.S."/>
            <person name="Hopper A.K."/>
        </authorList>
    </citation>
    <scope>NUCLEOTIDE SEQUENCE [GENOMIC DNA]</scope>
</reference>
<reference key="3">
    <citation type="journal article" date="1997" name="Nature">
        <title>The nucleotide sequence of Saccharomyces cerevisiae chromosome IV.</title>
        <authorList>
            <person name="Jacq C."/>
            <person name="Alt-Moerbe J."/>
            <person name="Andre B."/>
            <person name="Arnold W."/>
            <person name="Bahr A."/>
            <person name="Ballesta J.P.G."/>
            <person name="Bargues M."/>
            <person name="Baron L."/>
            <person name="Becker A."/>
            <person name="Biteau N."/>
            <person name="Bloecker H."/>
            <person name="Blugeon C."/>
            <person name="Boskovic J."/>
            <person name="Brandt P."/>
            <person name="Brueckner M."/>
            <person name="Buitrago M.J."/>
            <person name="Coster F."/>
            <person name="Delaveau T."/>
            <person name="del Rey F."/>
            <person name="Dujon B."/>
            <person name="Eide L.G."/>
            <person name="Garcia-Cantalejo J.M."/>
            <person name="Goffeau A."/>
            <person name="Gomez-Peris A."/>
            <person name="Granotier C."/>
            <person name="Hanemann V."/>
            <person name="Hankeln T."/>
            <person name="Hoheisel J.D."/>
            <person name="Jaeger W."/>
            <person name="Jimenez A."/>
            <person name="Jonniaux J.-L."/>
            <person name="Kraemer C."/>
            <person name="Kuester H."/>
            <person name="Laamanen P."/>
            <person name="Legros Y."/>
            <person name="Louis E.J."/>
            <person name="Moeller-Rieker S."/>
            <person name="Monnet A."/>
            <person name="Moro M."/>
            <person name="Mueller-Auer S."/>
            <person name="Nussbaumer B."/>
            <person name="Paricio N."/>
            <person name="Paulin L."/>
            <person name="Perea J."/>
            <person name="Perez-Alonso M."/>
            <person name="Perez-Ortin J.E."/>
            <person name="Pohl T.M."/>
            <person name="Prydz H."/>
            <person name="Purnelle B."/>
            <person name="Rasmussen S.W."/>
            <person name="Remacha M.A."/>
            <person name="Revuelta J.L."/>
            <person name="Rieger M."/>
            <person name="Salom D."/>
            <person name="Saluz H.P."/>
            <person name="Saiz J.E."/>
            <person name="Saren A.-M."/>
            <person name="Schaefer M."/>
            <person name="Scharfe M."/>
            <person name="Schmidt E.R."/>
            <person name="Schneider C."/>
            <person name="Scholler P."/>
            <person name="Schwarz S."/>
            <person name="Soler-Mira A."/>
            <person name="Urrestarazu L.A."/>
            <person name="Verhasselt P."/>
            <person name="Vissers S."/>
            <person name="Voet M."/>
            <person name="Volckaert G."/>
            <person name="Wagner G."/>
            <person name="Wambutt R."/>
            <person name="Wedler E."/>
            <person name="Wedler H."/>
            <person name="Woelfl S."/>
            <person name="Harris D.E."/>
            <person name="Bowman S."/>
            <person name="Brown D."/>
            <person name="Churcher C.M."/>
            <person name="Connor R."/>
            <person name="Dedman K."/>
            <person name="Gentles S."/>
            <person name="Hamlin N."/>
            <person name="Hunt S."/>
            <person name="Jones L."/>
            <person name="McDonald S."/>
            <person name="Murphy L.D."/>
            <person name="Niblett D."/>
            <person name="Odell C."/>
            <person name="Oliver K."/>
            <person name="Rajandream M.A."/>
            <person name="Richards C."/>
            <person name="Shore L."/>
            <person name="Walsh S.V."/>
            <person name="Barrell B.G."/>
            <person name="Dietrich F.S."/>
            <person name="Mulligan J.T."/>
            <person name="Allen E."/>
            <person name="Araujo R."/>
            <person name="Aviles E."/>
            <person name="Berno A."/>
            <person name="Carpenter J."/>
            <person name="Chen E."/>
            <person name="Cherry J.M."/>
            <person name="Chung E."/>
            <person name="Duncan M."/>
            <person name="Hunicke-Smith S."/>
            <person name="Hyman R.W."/>
            <person name="Komp C."/>
            <person name="Lashkari D."/>
            <person name="Lew H."/>
            <person name="Lin D."/>
            <person name="Mosedale D."/>
            <person name="Nakahara K."/>
            <person name="Namath A."/>
            <person name="Oefner P."/>
            <person name="Oh C."/>
            <person name="Petel F.X."/>
            <person name="Roberts D."/>
            <person name="Schramm S."/>
            <person name="Schroeder M."/>
            <person name="Shogren T."/>
            <person name="Shroff N."/>
            <person name="Winant A."/>
            <person name="Yelton M.A."/>
            <person name="Botstein D."/>
            <person name="Davis R.W."/>
            <person name="Johnston M."/>
            <person name="Andrews S."/>
            <person name="Brinkman R."/>
            <person name="Cooper J."/>
            <person name="Ding H."/>
            <person name="Du Z."/>
            <person name="Favello A."/>
            <person name="Fulton L."/>
            <person name="Gattung S."/>
            <person name="Greco T."/>
            <person name="Hallsworth K."/>
            <person name="Hawkins J."/>
            <person name="Hillier L.W."/>
            <person name="Jier M."/>
            <person name="Johnson D."/>
            <person name="Johnston L."/>
            <person name="Kirsten J."/>
            <person name="Kucaba T."/>
            <person name="Langston Y."/>
            <person name="Latreille P."/>
            <person name="Le T."/>
            <person name="Mardis E."/>
            <person name="Menezes S."/>
            <person name="Miller N."/>
            <person name="Nhan M."/>
            <person name="Pauley A."/>
            <person name="Peluso D."/>
            <person name="Rifkin L."/>
            <person name="Riles L."/>
            <person name="Taich A."/>
            <person name="Trevaskis E."/>
            <person name="Vignati D."/>
            <person name="Wilcox L."/>
            <person name="Wohldman P."/>
            <person name="Vaudin M."/>
            <person name="Wilson R."/>
            <person name="Waterston R."/>
            <person name="Albermann K."/>
            <person name="Hani J."/>
            <person name="Heumann K."/>
            <person name="Kleine K."/>
            <person name="Mewes H.-W."/>
            <person name="Zollner A."/>
            <person name="Zaccaria P."/>
        </authorList>
    </citation>
    <scope>NUCLEOTIDE SEQUENCE [LARGE SCALE GENOMIC DNA]</scope>
    <source>
        <strain>ATCC 204508 / S288c</strain>
    </source>
</reference>
<reference key="4">
    <citation type="journal article" date="2014" name="G3 (Bethesda)">
        <title>The reference genome sequence of Saccharomyces cerevisiae: Then and now.</title>
        <authorList>
            <person name="Engel S.R."/>
            <person name="Dietrich F.S."/>
            <person name="Fisk D.G."/>
            <person name="Binkley G."/>
            <person name="Balakrishnan R."/>
            <person name="Costanzo M.C."/>
            <person name="Dwight S.S."/>
            <person name="Hitz B.C."/>
            <person name="Karra K."/>
            <person name="Nash R.S."/>
            <person name="Weng S."/>
            <person name="Wong E.D."/>
            <person name="Lloyd P."/>
            <person name="Skrzypek M.S."/>
            <person name="Miyasato S.R."/>
            <person name="Simison M."/>
            <person name="Cherry J.M."/>
        </authorList>
    </citation>
    <scope>GENOME REANNOTATION</scope>
    <source>
        <strain>ATCC 204508 / S288c</strain>
    </source>
</reference>
<reference key="5">
    <citation type="journal article" date="1996" name="Yeast">
        <title>Sequencing and analysis of a 35.4 kb region on the right arm of chromosome IV from Saccharomyces cerevisiae reveal 23 open reading frames.</title>
        <authorList>
            <person name="Eide L.G."/>
            <person name="Sander C."/>
            <person name="Prydz H."/>
        </authorList>
    </citation>
    <scope>NUCLEOTIDE SEQUENCE [GENOMIC DNA] OF 775-1014</scope>
</reference>
<reference key="6">
    <citation type="journal article" date="1995" name="EMBO J.">
        <title>REG1 binds to protein phosphatase type 1 and regulates glucose repression in Saccharomyces cerevisiae.</title>
        <authorList>
            <person name="Tu J.L."/>
            <person name="Carlson M."/>
        </authorList>
    </citation>
    <scope>INTERACTION WITH PP1</scope>
</reference>
<reference key="7">
    <citation type="journal article" date="2003" name="Nature">
        <title>Global analysis of protein expression in yeast.</title>
        <authorList>
            <person name="Ghaemmaghami S."/>
            <person name="Huh W.-K."/>
            <person name="Bower K."/>
            <person name="Howson R.W."/>
            <person name="Belle A."/>
            <person name="Dephoure N."/>
            <person name="O'Shea E.K."/>
            <person name="Weissman J.S."/>
        </authorList>
    </citation>
    <scope>LEVEL OF PROTEIN EXPRESSION [LARGE SCALE ANALYSIS]</scope>
</reference>
<reference key="8">
    <citation type="journal article" date="2005" name="Mol. Cell. Proteomics">
        <title>Quantitative phosphoproteomics applied to the yeast pheromone signaling pathway.</title>
        <authorList>
            <person name="Gruhler A."/>
            <person name="Olsen J.V."/>
            <person name="Mohammed S."/>
            <person name="Mortensen P."/>
            <person name="Faergeman N.J."/>
            <person name="Mann M."/>
            <person name="Jensen O.N."/>
        </authorList>
    </citation>
    <scope>ACETYLATION [LARGE SCALE ANALYSIS] AT SER-2</scope>
    <scope>PHOSPHORYLATION [LARGE SCALE ANALYSIS] AT SER-75</scope>
    <scope>CLEAVAGE OF INITIATOR METHIONINE [LARGE SCALE ANALYSIS]</scope>
    <scope>IDENTIFICATION BY MASS SPECTROMETRY [LARGE SCALE ANALYSIS]</scope>
    <source>
        <strain>YAL6B</strain>
    </source>
</reference>
<reference key="9">
    <citation type="journal article" date="2007" name="J. Proteome Res.">
        <title>Large-scale phosphorylation analysis of alpha-factor-arrested Saccharomyces cerevisiae.</title>
        <authorList>
            <person name="Li X."/>
            <person name="Gerber S.A."/>
            <person name="Rudner A.D."/>
            <person name="Beausoleil S.A."/>
            <person name="Haas W."/>
            <person name="Villen J."/>
            <person name="Elias J.E."/>
            <person name="Gygi S.P."/>
        </authorList>
    </citation>
    <scope>PHOSPHORYLATION [LARGE SCALE ANALYSIS] AT SER-75; SER-421; SER-572 AND SER-576</scope>
    <scope>IDENTIFICATION BY MASS SPECTROMETRY [LARGE SCALE ANALYSIS]</scope>
    <source>
        <strain>ADR376</strain>
    </source>
</reference>
<reference key="10">
    <citation type="journal article" date="2007" name="Proc. Natl. Acad. Sci. U.S.A.">
        <title>Analysis of phosphorylation sites on proteins from Saccharomyces cerevisiae by electron transfer dissociation (ETD) mass spectrometry.</title>
        <authorList>
            <person name="Chi A."/>
            <person name="Huttenhower C."/>
            <person name="Geer L.Y."/>
            <person name="Coon J.J."/>
            <person name="Syka J.E.P."/>
            <person name="Bai D.L."/>
            <person name="Shabanowitz J."/>
            <person name="Burke D.J."/>
            <person name="Troyanskaya O.G."/>
            <person name="Hunt D.F."/>
        </authorList>
    </citation>
    <scope>PHOSPHORYLATION [LARGE SCALE ANALYSIS] AT THR-73; SER-75; TYR-480 AND SER-490</scope>
    <scope>IDENTIFICATION BY MASS SPECTROMETRY [LARGE SCALE ANALYSIS]</scope>
</reference>
<reference key="11">
    <citation type="journal article" date="2008" name="Mol. Cell. Proteomics">
        <title>A multidimensional chromatography technology for in-depth phosphoproteome analysis.</title>
        <authorList>
            <person name="Albuquerque C.P."/>
            <person name="Smolka M.B."/>
            <person name="Payne S.H."/>
            <person name="Bafna V."/>
            <person name="Eng J."/>
            <person name="Zhou H."/>
        </authorList>
    </citation>
    <scope>PHOSPHORYLATION [LARGE SCALE ANALYSIS] AT SER-75; SER-254; SER-311; SER-421; SER-576 AND SER-680</scope>
    <scope>IDENTIFICATION BY MASS SPECTROMETRY [LARGE SCALE ANALYSIS]</scope>
</reference>
<reference key="12">
    <citation type="journal article" date="2009" name="Science">
        <title>Global analysis of Cdk1 substrate phosphorylation sites provides insights into evolution.</title>
        <authorList>
            <person name="Holt L.J."/>
            <person name="Tuch B.B."/>
            <person name="Villen J."/>
            <person name="Johnson A.D."/>
            <person name="Gygi S.P."/>
            <person name="Morgan D.O."/>
        </authorList>
    </citation>
    <scope>PHOSPHORYLATION [LARGE SCALE ANALYSIS] AT SER-75; SER-242; SER-421; SER-570; SER-572; SER-576; SER-610; SER-614; THR-896; SER-898 AND SER-980</scope>
    <scope>IDENTIFICATION BY MASS SPECTROMETRY [LARGE SCALE ANALYSIS]</scope>
</reference>
<reference key="13">
    <citation type="journal article" date="2011" name="Eukaryot. Cell">
        <title>Interaction of SNF1 protein kinase with its activating kinase Sak1.</title>
        <authorList>
            <person name="Liu Y."/>
            <person name="Xu X."/>
            <person name="Carlson M."/>
        </authorList>
    </citation>
    <scope>FUNCTION</scope>
    <scope>INTERACTION WITH SAK1</scope>
</reference>
<reference key="14">
    <citation type="journal article" date="2012" name="Proc. Natl. Acad. Sci. U.S.A.">
        <title>N-terminal acetylome analyses and functional insights of the N-terminal acetyltransferase NatB.</title>
        <authorList>
            <person name="Van Damme P."/>
            <person name="Lasa M."/>
            <person name="Polevoda B."/>
            <person name="Gazquez C."/>
            <person name="Elosegui-Artola A."/>
            <person name="Kim D.S."/>
            <person name="De Juan-Pardo E."/>
            <person name="Demeyer K."/>
            <person name="Hole K."/>
            <person name="Larrea E."/>
            <person name="Timmerman E."/>
            <person name="Prieto J."/>
            <person name="Arnesen T."/>
            <person name="Sherman F."/>
            <person name="Gevaert K."/>
            <person name="Aldabe R."/>
        </authorList>
    </citation>
    <scope>ACETYLATION [LARGE SCALE ANALYSIS] AT SER-2</scope>
    <scope>CLEAVAGE OF INITIATOR METHIONINE [LARGE SCALE ANALYSIS]</scope>
    <scope>IDENTIFICATION BY MASS SPECTROMETRY [LARGE SCALE ANALYSIS]</scope>
</reference>
<dbReference type="EMBL" id="M33703">
    <property type="protein sequence ID" value="AAA34670.1"/>
    <property type="molecule type" value="Genomic_DNA"/>
</dbReference>
<dbReference type="EMBL" id="M90540">
    <property type="protein sequence ID" value="AAB59326.1"/>
    <property type="molecule type" value="Genomic_DNA"/>
</dbReference>
<dbReference type="EMBL" id="Z47814">
    <property type="protein sequence ID" value="CAA87807.1"/>
    <property type="molecule type" value="Genomic_DNA"/>
</dbReference>
<dbReference type="EMBL" id="Z74324">
    <property type="protein sequence ID" value="CAA98850.1"/>
    <property type="molecule type" value="Genomic_DNA"/>
</dbReference>
<dbReference type="EMBL" id="X95966">
    <property type="protein sequence ID" value="CAA65223.1"/>
    <property type="molecule type" value="Genomic_DNA"/>
</dbReference>
<dbReference type="EMBL" id="BK006938">
    <property type="protein sequence ID" value="DAA11873.1"/>
    <property type="molecule type" value="Genomic_DNA"/>
</dbReference>
<dbReference type="PIR" id="S32613">
    <property type="entry name" value="S32613"/>
</dbReference>
<dbReference type="RefSeq" id="NP_010311.1">
    <property type="nucleotide sequence ID" value="NM_001180336.1"/>
</dbReference>
<dbReference type="BioGRID" id="32078">
    <property type="interactions" value="147"/>
</dbReference>
<dbReference type="ComplexPortal" id="CPX-1266">
    <property type="entry name" value="REG1-GLC7 phosphatase complex"/>
</dbReference>
<dbReference type="DIP" id="DIP-2513N"/>
<dbReference type="ELM" id="Q00816"/>
<dbReference type="FunCoup" id="Q00816">
    <property type="interactions" value="470"/>
</dbReference>
<dbReference type="IntAct" id="Q00816">
    <property type="interactions" value="31"/>
</dbReference>
<dbReference type="MINT" id="Q00816"/>
<dbReference type="STRING" id="4932.YDR028C"/>
<dbReference type="iPTMnet" id="Q00816"/>
<dbReference type="PaxDb" id="4932-YDR028C"/>
<dbReference type="PeptideAtlas" id="Q00816"/>
<dbReference type="EnsemblFungi" id="YDR028C_mRNA">
    <property type="protein sequence ID" value="YDR028C"/>
    <property type="gene ID" value="YDR028C"/>
</dbReference>
<dbReference type="GeneID" id="851592"/>
<dbReference type="KEGG" id="sce:YDR028C"/>
<dbReference type="AGR" id="SGD:S000002435"/>
<dbReference type="SGD" id="S000002435">
    <property type="gene designation" value="REG1"/>
</dbReference>
<dbReference type="VEuPathDB" id="FungiDB:YDR028C"/>
<dbReference type="eggNOG" id="ENOG502QSII">
    <property type="taxonomic scope" value="Eukaryota"/>
</dbReference>
<dbReference type="HOGENOM" id="CLU_012586_0_0_1"/>
<dbReference type="InParanoid" id="Q00816"/>
<dbReference type="OMA" id="WKYIILK"/>
<dbReference type="OrthoDB" id="5563539at2759"/>
<dbReference type="BioCyc" id="YEAST:G3O-29644-MONOMER"/>
<dbReference type="BioGRID-ORCS" id="851592">
    <property type="hits" value="3 hits in 10 CRISPR screens"/>
</dbReference>
<dbReference type="ChiTaRS" id="REG1">
    <property type="organism name" value="yeast"/>
</dbReference>
<dbReference type="PRO" id="PR:Q00816"/>
<dbReference type="Proteomes" id="UP000002311">
    <property type="component" value="Chromosome IV"/>
</dbReference>
<dbReference type="RNAct" id="Q00816">
    <property type="molecule type" value="protein"/>
</dbReference>
<dbReference type="GO" id="GO:0005737">
    <property type="term" value="C:cytoplasm"/>
    <property type="evidence" value="ECO:0000314"/>
    <property type="project" value="SGD"/>
</dbReference>
<dbReference type="GO" id="GO:0005634">
    <property type="term" value="C:nucleus"/>
    <property type="evidence" value="ECO:0007669"/>
    <property type="project" value="UniProtKB-SubCell"/>
</dbReference>
<dbReference type="GO" id="GO:0000164">
    <property type="term" value="C:protein phosphatase type 1 complex"/>
    <property type="evidence" value="ECO:0000353"/>
    <property type="project" value="ComplexPortal"/>
</dbReference>
<dbReference type="GO" id="GO:0005773">
    <property type="term" value="C:vacuole"/>
    <property type="evidence" value="ECO:0007669"/>
    <property type="project" value="GOC"/>
</dbReference>
<dbReference type="GO" id="GO:0019888">
    <property type="term" value="F:protein phosphatase regulator activity"/>
    <property type="evidence" value="ECO:0000304"/>
    <property type="project" value="SGD"/>
</dbReference>
<dbReference type="GO" id="GO:0042149">
    <property type="term" value="P:cellular response to glucose starvation"/>
    <property type="evidence" value="ECO:0000315"/>
    <property type="project" value="SGD"/>
</dbReference>
<dbReference type="GO" id="GO:0007039">
    <property type="term" value="P:protein catabolic process in the vacuole"/>
    <property type="evidence" value="ECO:0000314"/>
    <property type="project" value="SGD"/>
</dbReference>
<dbReference type="GO" id="GO:1904547">
    <property type="term" value="P:regulation of cellular response to glucose starvation"/>
    <property type="evidence" value="ECO:0000303"/>
    <property type="project" value="ComplexPortal"/>
</dbReference>
<dbReference type="GO" id="GO:0006986">
    <property type="term" value="P:response to unfolded protein"/>
    <property type="evidence" value="ECO:0000315"/>
    <property type="project" value="SGD"/>
</dbReference>
<dbReference type="InterPro" id="IPR013860">
    <property type="entry name" value="AreA_GATA"/>
</dbReference>
<dbReference type="InterPro" id="IPR052292">
    <property type="entry name" value="Glucose_repression_reg"/>
</dbReference>
<dbReference type="PANTHER" id="PTHR28051">
    <property type="entry name" value="PROTEIN MTL1-RELATED"/>
    <property type="match status" value="1"/>
</dbReference>
<dbReference type="PANTHER" id="PTHR28051:SF1">
    <property type="entry name" value="PROTEIN MTL1-RELATED"/>
    <property type="match status" value="1"/>
</dbReference>
<dbReference type="Pfam" id="PF08550">
    <property type="entry name" value="GATA_AreA"/>
    <property type="match status" value="1"/>
</dbReference>
<gene>
    <name type="primary">REG1</name>
    <name type="synonym">HEX2</name>
    <name type="synonym">PZF240</name>
    <name type="synonym">SPP43</name>
    <name type="synonym">SRN1</name>
    <name type="ordered locus">YDR028C</name>
    <name type="ORF">YD9813.06C</name>
</gene>
<organism>
    <name type="scientific">Saccharomyces cerevisiae (strain ATCC 204508 / S288c)</name>
    <name type="common">Baker's yeast</name>
    <dbReference type="NCBI Taxonomy" id="559292"/>
    <lineage>
        <taxon>Eukaryota</taxon>
        <taxon>Fungi</taxon>
        <taxon>Dikarya</taxon>
        <taxon>Ascomycota</taxon>
        <taxon>Saccharomycotina</taxon>
        <taxon>Saccharomycetes</taxon>
        <taxon>Saccharomycetales</taxon>
        <taxon>Saccharomycetaceae</taxon>
        <taxon>Saccharomyces</taxon>
    </lineage>
</organism>
<sequence length="1014" mass="112616">MSTNLANYFAGKKDIENEHVNRNASHESNSKSDVKISGNDNDNDEDMGPSVSMAVQAKNDDDFHKSTFNLKRTRSMGLLDEYIDPTKKLLGRSDDLYDNDNEYYDNSSNNSSSNSSDDDYDDGYQEHSTSVSPPPADNDSYLIPQDDNDVVVEPERHVDYLSHEWKESEISNSWKYIILKKKKRDVDLVNAARLENASWRTWAKARNNLKTVSPEVVNWSKDSDVTWLYGPIVRDSEGNAQSEEEHDLERGYGSDDENSKRISMPTKNSKSIAAAPKPILKKRTVTEIIEDNALWKLNEARKHMTEMKHASVIMDPNGNKNVHDDFDALAAQVNAQYYHYPKESNSSVSLKSQHSDKKDNSTIPNPVGENSNGGGDKGEEDLHLKSALHVQNNRSTAQSNKSILENSTNDRKANLDQNLNSPDNNRFPSSTSSSNRDNENNSMGLSSILTSNPSEKSNKPTKNRHIHFNDRVEQCMALRYPASQSEDDESDDENKQYVDVNNNANVTTINNNRTPLLAIQHKSIPINSATEHLNKNTSDDDTSSQSSSSSHSDDEEHGGLYINARFSRRSDSGVHSPITDNSSVASSTTSRAHVRPIIKLLPDTTLNYGSDEESDNGEFNGYGNAVSHNVNTSRGYDYIYDYNSVYTGDTSSFLPVDSCDIVDVPEGMDLQTAIADDNASNYEFNNAVESKEKHVPQLHKASANNTTRQHGSHMLLYDDDNYSSSSDSEQQFIEDSQYNSSDDEEEEDDDDQEVDDNHDEGLSLRRTLSLGKSGSTNSLYDLAQPSLSSATPQQKNPTNFTGGKTDVDKDAQLAVRPYPLKRNSSSGNFIFNSDSEEESSSEEEQRPLPANSQLVNRSVLKGSVTPANISSQKKKALPKQPKASDSSQSFRIVNNTPSPAEVGASDVAIEGYFSPRNESIKSVVSGGNMMDHQDHSEMDTLAKGFENCHINNASKLKDKKVDSVQTTRKEASLTDSSNESLHKVVQNARGMASKYLHSWKKSDVKPQENGNDSS</sequence>
<comment type="function">
    <text evidence="4">Involved in RNA processing and negative regulation of glucose repression. Regulates the level of two antigens, P43 and P70. Binds to protein phosphatase type 1. Functions with REG2 and SNF1 protein kinase to regulate growth. Might regulate SNF1 directly or indirectly.</text>
</comment>
<comment type="subunit">
    <text evidence="4 5">Interacts with SAK1.</text>
</comment>
<comment type="interaction">
    <interactant intactId="EBI-8270">
        <id>Q00816</id>
    </interactant>
    <interactant intactId="EBI-13715">
        <id>P32598</id>
        <label>GLC7</label>
    </interactant>
    <organismsDiffer>false</organismsDiffer>
    <experiments>5</experiments>
</comment>
<comment type="interaction">
    <interactant intactId="EBI-8270">
        <id>Q00816</id>
    </interactant>
    <interactant intactId="EBI-17516">
        <id>P06782</id>
        <label>SNF1</label>
    </interactant>
    <organismsDiffer>false</organismsDiffer>
    <experiments>8</experiments>
</comment>
<comment type="subcellular location">
    <subcellularLocation>
        <location>Nucleus</location>
    </subcellularLocation>
</comment>
<comment type="miscellaneous">
    <text evidence="3">Present with 2560 molecules/cell in log phase SD medium.</text>
</comment>
<feature type="initiator methionine" description="Removed" evidence="7 12">
    <location>
        <position position="1"/>
    </location>
</feature>
<feature type="chain" id="PRO_0000083953" description="Resistance to glucose repression protein 1">
    <location>
        <begin position="2"/>
        <end position="1014"/>
    </location>
</feature>
<feature type="region of interest" description="Disordered" evidence="2">
    <location>
        <begin position="1"/>
        <end position="63"/>
    </location>
</feature>
<feature type="region of interest" description="Disordered" evidence="2">
    <location>
        <begin position="90"/>
        <end position="144"/>
    </location>
</feature>
<feature type="region of interest" description="Disordered" evidence="2">
    <location>
        <begin position="236"/>
        <end position="270"/>
    </location>
</feature>
<feature type="region of interest" description="Disordered" evidence="2">
    <location>
        <begin position="340"/>
        <end position="463"/>
    </location>
</feature>
<feature type="region of interest" description="Disordered" evidence="2">
    <location>
        <begin position="531"/>
        <end position="557"/>
    </location>
</feature>
<feature type="region of interest" description="Disordered" evidence="2">
    <location>
        <begin position="570"/>
        <end position="591"/>
    </location>
</feature>
<feature type="region of interest" description="Disordered" evidence="2">
    <location>
        <begin position="690"/>
        <end position="897"/>
    </location>
</feature>
<feature type="region of interest" description="Disordered" evidence="2">
    <location>
        <begin position="959"/>
        <end position="982"/>
    </location>
</feature>
<feature type="short sequence motif" description="Nuclear localization signal" evidence="1">
    <location>
        <begin position="277"/>
        <end position="283"/>
    </location>
</feature>
<feature type="short sequence motif" description="Nuclear localization signal" evidence="1">
    <location>
        <begin position="595"/>
        <end position="599"/>
    </location>
</feature>
<feature type="short sequence motif" description="Nuclear localization signal" evidence="1">
    <location>
        <begin position="873"/>
        <end position="879"/>
    </location>
</feature>
<feature type="compositionally biased region" description="Basic and acidic residues" evidence="2">
    <location>
        <begin position="11"/>
        <end position="34"/>
    </location>
</feature>
<feature type="compositionally biased region" description="Low complexity" evidence="2">
    <location>
        <begin position="104"/>
        <end position="115"/>
    </location>
</feature>
<feature type="compositionally biased region" description="Basic and acidic residues" evidence="2">
    <location>
        <begin position="247"/>
        <end position="260"/>
    </location>
</feature>
<feature type="compositionally biased region" description="Polar residues" evidence="2">
    <location>
        <begin position="343"/>
        <end position="352"/>
    </location>
</feature>
<feature type="compositionally biased region" description="Polar residues" evidence="2">
    <location>
        <begin position="361"/>
        <end position="370"/>
    </location>
</feature>
<feature type="compositionally biased region" description="Polar residues" evidence="2">
    <location>
        <begin position="389"/>
        <end position="407"/>
    </location>
</feature>
<feature type="compositionally biased region" description="Polar residues" evidence="2">
    <location>
        <begin position="415"/>
        <end position="455"/>
    </location>
</feature>
<feature type="compositionally biased region" description="Polar residues" evidence="2">
    <location>
        <begin position="578"/>
        <end position="591"/>
    </location>
</feature>
<feature type="compositionally biased region" description="Low complexity" evidence="2">
    <location>
        <begin position="722"/>
        <end position="740"/>
    </location>
</feature>
<feature type="compositionally biased region" description="Acidic residues" evidence="2">
    <location>
        <begin position="741"/>
        <end position="758"/>
    </location>
</feature>
<feature type="compositionally biased region" description="Polar residues" evidence="2">
    <location>
        <begin position="770"/>
        <end position="802"/>
    </location>
</feature>
<feature type="compositionally biased region" description="Polar residues" evidence="2">
    <location>
        <begin position="822"/>
        <end position="833"/>
    </location>
</feature>
<feature type="compositionally biased region" description="Polar residues" evidence="2">
    <location>
        <begin position="884"/>
        <end position="897"/>
    </location>
</feature>
<feature type="compositionally biased region" description="Basic and acidic residues" evidence="2">
    <location>
        <begin position="959"/>
        <end position="972"/>
    </location>
</feature>
<feature type="modified residue" description="N-acetylserine" evidence="7 12">
    <location>
        <position position="2"/>
    </location>
</feature>
<feature type="modified residue" description="Phosphothreonine" evidence="8">
    <location>
        <position position="73"/>
    </location>
</feature>
<feature type="modified residue" description="Phosphoserine" evidence="7 8 9 10 11">
    <location>
        <position position="75"/>
    </location>
</feature>
<feature type="modified residue" description="Phosphoserine" evidence="11">
    <location>
        <position position="242"/>
    </location>
</feature>
<feature type="modified residue" description="Phosphoserine" evidence="10">
    <location>
        <position position="254"/>
    </location>
</feature>
<feature type="modified residue" description="Phosphoserine" evidence="10">
    <location>
        <position position="311"/>
    </location>
</feature>
<feature type="modified residue" description="Phosphoserine" evidence="9 10 11">
    <location>
        <position position="421"/>
    </location>
</feature>
<feature type="modified residue" description="Phosphotyrosine" evidence="8">
    <location>
        <position position="480"/>
    </location>
</feature>
<feature type="modified residue" description="Phosphoserine" evidence="8">
    <location>
        <position position="490"/>
    </location>
</feature>
<feature type="modified residue" description="Phosphoserine" evidence="11">
    <location>
        <position position="570"/>
    </location>
</feature>
<feature type="modified residue" description="Phosphoserine" evidence="9 11">
    <location>
        <position position="572"/>
    </location>
</feature>
<feature type="modified residue" description="Phosphoserine" evidence="9 10 11">
    <location>
        <position position="576"/>
    </location>
</feature>
<feature type="modified residue" description="Phosphoserine" evidence="11">
    <location>
        <position position="610"/>
    </location>
</feature>
<feature type="modified residue" description="Phosphoserine" evidence="11">
    <location>
        <position position="614"/>
    </location>
</feature>
<feature type="modified residue" description="Phosphoserine" evidence="10">
    <location>
        <position position="680"/>
    </location>
</feature>
<feature type="modified residue" description="Phosphothreonine" evidence="11">
    <location>
        <position position="896"/>
    </location>
</feature>
<feature type="modified residue" description="Phosphoserine" evidence="11">
    <location>
        <position position="898"/>
    </location>
</feature>
<feature type="modified residue" description="Phosphoserine" evidence="11">
    <location>
        <position position="980"/>
    </location>
</feature>
<feature type="sequence conflict" description="In Ref. 1; AAA34670." evidence="6" ref="1">
    <original>DK</original>
    <variation>EE</variation>
    <location>
        <begin position="376"/>
        <end position="377"/>
    </location>
</feature>
<feature type="sequence conflict" description="In Ref. 1; AAA34670." evidence="6" ref="1">
    <original>N</original>
    <variation>K</variation>
    <location>
        <position position="534"/>
    </location>
</feature>
<feature type="sequence conflict" description="In Ref. 1; AAA34670." evidence="6" ref="1">
    <original>D</original>
    <variation>H</variation>
    <location>
        <position position="657"/>
    </location>
</feature>
<feature type="sequence conflict" description="In Ref. 1; AAA34670." evidence="6" ref="1">
    <original>S</original>
    <variation>T</variation>
    <location>
        <position position="889"/>
    </location>
</feature>
<feature type="sequence conflict" description="In Ref. 1." evidence="6" ref="1">
    <original>ARGMASKYLHSWKKSDVKPQENGNDSS</original>
    <variation>QEVWQASTCTLGKRVTSSHKKMEMTAVRRKNFEVNMKRK</variation>
    <location>
        <begin position="988"/>
        <end position="1014"/>
    </location>
</feature>
<name>REG1_YEAST</name>
<accession>Q00816</accession>
<accession>D6VS13</accession>
<keyword id="KW-0007">Acetylation</keyword>
<keyword id="KW-0539">Nucleus</keyword>
<keyword id="KW-0597">Phosphoprotein</keyword>
<keyword id="KW-1185">Reference proteome</keyword>